<organism>
    <name type="scientific">Bos taurus</name>
    <name type="common">Bovine</name>
    <dbReference type="NCBI Taxonomy" id="9913"/>
    <lineage>
        <taxon>Eukaryota</taxon>
        <taxon>Metazoa</taxon>
        <taxon>Chordata</taxon>
        <taxon>Craniata</taxon>
        <taxon>Vertebrata</taxon>
        <taxon>Euteleostomi</taxon>
        <taxon>Mammalia</taxon>
        <taxon>Eutheria</taxon>
        <taxon>Laurasiatheria</taxon>
        <taxon>Artiodactyla</taxon>
        <taxon>Ruminantia</taxon>
        <taxon>Pecora</taxon>
        <taxon>Bovidae</taxon>
        <taxon>Bovinae</taxon>
        <taxon>Bos</taxon>
    </lineage>
</organism>
<evidence type="ECO:0000250" key="1">
    <source>
        <dbReference type="UniProtKB" id="Q5FVG2"/>
    </source>
</evidence>
<evidence type="ECO:0000250" key="2">
    <source>
        <dbReference type="UniProtKB" id="Q8BGS1"/>
    </source>
</evidence>
<evidence type="ECO:0000250" key="3">
    <source>
        <dbReference type="UniProtKB" id="Q9HCM4"/>
    </source>
</evidence>
<evidence type="ECO:0000255" key="4">
    <source>
        <dbReference type="PROSITE-ProRule" id="PRU00084"/>
    </source>
</evidence>
<evidence type="ECO:0000256" key="5">
    <source>
        <dbReference type="SAM" id="MobiDB-lite"/>
    </source>
</evidence>
<evidence type="ECO:0000269" key="6">
    <source>
    </source>
</evidence>
<evidence type="ECO:0000305" key="7"/>
<proteinExistence type="evidence at protein level"/>
<dbReference type="EMBL" id="BT021855">
    <property type="protein sequence ID" value="AAX46702.1"/>
    <property type="molecule type" value="mRNA"/>
</dbReference>
<dbReference type="EMBL" id="BC105257">
    <property type="protein sequence ID" value="AAI05258.1"/>
    <property type="molecule type" value="mRNA"/>
</dbReference>
<dbReference type="RefSeq" id="NP_001030461.1">
    <property type="nucleotide sequence ID" value="NM_001035384.2"/>
</dbReference>
<dbReference type="SMR" id="Q58CU2"/>
<dbReference type="FunCoup" id="Q58CU2">
    <property type="interactions" value="524"/>
</dbReference>
<dbReference type="IntAct" id="Q58CU2">
    <property type="interactions" value="1"/>
</dbReference>
<dbReference type="STRING" id="9913.ENSBTAP00000053352"/>
<dbReference type="PaxDb" id="9913-ENSBTAP00000053352"/>
<dbReference type="GeneID" id="530941"/>
<dbReference type="KEGG" id="bta:530941"/>
<dbReference type="CTD" id="57669"/>
<dbReference type="VEuPathDB" id="HostDB:ENSBTAG00000018236"/>
<dbReference type="eggNOG" id="KOG3530">
    <property type="taxonomic scope" value="Eukaryota"/>
</dbReference>
<dbReference type="HOGENOM" id="CLU_003623_1_0_1"/>
<dbReference type="InParanoid" id="Q58CU2"/>
<dbReference type="OMA" id="DCCQHGG"/>
<dbReference type="OrthoDB" id="6235974at2759"/>
<dbReference type="Reactome" id="R-BTA-6794361">
    <property type="pathway name" value="Neurexins and neuroligins"/>
</dbReference>
<dbReference type="Proteomes" id="UP000009136">
    <property type="component" value="Chromosome 2"/>
</dbReference>
<dbReference type="Bgee" id="ENSBTAG00000018236">
    <property type="expression patterns" value="Expressed in thyroid gland and 102 other cell types or tissues"/>
</dbReference>
<dbReference type="GO" id="GO:0005912">
    <property type="term" value="C:adherens junction"/>
    <property type="evidence" value="ECO:0007669"/>
    <property type="project" value="UniProtKB-SubCell"/>
</dbReference>
<dbReference type="GO" id="GO:0005737">
    <property type="term" value="C:cytoplasm"/>
    <property type="evidence" value="ECO:0007669"/>
    <property type="project" value="UniProtKB-SubCell"/>
</dbReference>
<dbReference type="GO" id="GO:0005856">
    <property type="term" value="C:cytoskeleton"/>
    <property type="evidence" value="ECO:0000318"/>
    <property type="project" value="GO_Central"/>
</dbReference>
<dbReference type="GO" id="GO:0001917">
    <property type="term" value="C:photoreceptor inner segment"/>
    <property type="evidence" value="ECO:0007669"/>
    <property type="project" value="UniProtKB-SubCell"/>
</dbReference>
<dbReference type="GO" id="GO:0005886">
    <property type="term" value="C:plasma membrane"/>
    <property type="evidence" value="ECO:0007669"/>
    <property type="project" value="UniProtKB-SubCell"/>
</dbReference>
<dbReference type="GO" id="GO:0008092">
    <property type="term" value="F:cytoskeletal protein binding"/>
    <property type="evidence" value="ECO:0007669"/>
    <property type="project" value="InterPro"/>
</dbReference>
<dbReference type="GO" id="GO:0031032">
    <property type="term" value="P:actomyosin structure organization"/>
    <property type="evidence" value="ECO:0000318"/>
    <property type="project" value="GO_Central"/>
</dbReference>
<dbReference type="CDD" id="cd14473">
    <property type="entry name" value="FERM_B-lobe"/>
    <property type="match status" value="1"/>
</dbReference>
<dbReference type="CDD" id="cd13186">
    <property type="entry name" value="FERM_C_NBL4_NBL5"/>
    <property type="match status" value="1"/>
</dbReference>
<dbReference type="FunFam" id="2.30.29.30:FF:000002">
    <property type="entry name" value="Band 4.1-like protein 5 isoform 1"/>
    <property type="match status" value="1"/>
</dbReference>
<dbReference type="FunFam" id="3.10.20.90:FF:000024">
    <property type="entry name" value="Erythrocyte membrane protein band 4.1-like 5"/>
    <property type="match status" value="1"/>
</dbReference>
<dbReference type="FunFam" id="1.20.80.10:FF:000003">
    <property type="entry name" value="Tyrosine-protein phosphatase non-receptor type 4"/>
    <property type="match status" value="1"/>
</dbReference>
<dbReference type="Gene3D" id="1.20.80.10">
    <property type="match status" value="1"/>
</dbReference>
<dbReference type="Gene3D" id="3.10.20.90">
    <property type="entry name" value="Phosphatidylinositol 3-kinase Catalytic Subunit, Chain A, domain 1"/>
    <property type="match status" value="1"/>
</dbReference>
<dbReference type="Gene3D" id="2.30.29.30">
    <property type="entry name" value="Pleckstrin-homology domain (PH domain)/Phosphotyrosine-binding domain (PTB)"/>
    <property type="match status" value="1"/>
</dbReference>
<dbReference type="InterPro" id="IPR019749">
    <property type="entry name" value="Band_41_domain"/>
</dbReference>
<dbReference type="InterPro" id="IPR000798">
    <property type="entry name" value="Ez/rad/moesin-like"/>
</dbReference>
<dbReference type="InterPro" id="IPR014847">
    <property type="entry name" value="FA"/>
</dbReference>
<dbReference type="InterPro" id="IPR014352">
    <property type="entry name" value="FERM/acyl-CoA-bd_prot_sf"/>
</dbReference>
<dbReference type="InterPro" id="IPR035963">
    <property type="entry name" value="FERM_2"/>
</dbReference>
<dbReference type="InterPro" id="IPR019748">
    <property type="entry name" value="FERM_central"/>
</dbReference>
<dbReference type="InterPro" id="IPR019747">
    <property type="entry name" value="FERM_CS"/>
</dbReference>
<dbReference type="InterPro" id="IPR000299">
    <property type="entry name" value="FERM_domain"/>
</dbReference>
<dbReference type="InterPro" id="IPR018979">
    <property type="entry name" value="FERM_N"/>
</dbReference>
<dbReference type="InterPro" id="IPR018980">
    <property type="entry name" value="FERM_PH-like_C"/>
</dbReference>
<dbReference type="InterPro" id="IPR011993">
    <property type="entry name" value="PH-like_dom_sf"/>
</dbReference>
<dbReference type="InterPro" id="IPR029071">
    <property type="entry name" value="Ubiquitin-like_domsf"/>
</dbReference>
<dbReference type="PANTHER" id="PTHR23280">
    <property type="entry name" value="4.1 G PROTEIN"/>
    <property type="match status" value="1"/>
</dbReference>
<dbReference type="PANTHER" id="PTHR23280:SF15">
    <property type="entry name" value="BAND 4.1-LIKE PROTEIN 5"/>
    <property type="match status" value="1"/>
</dbReference>
<dbReference type="Pfam" id="PF08736">
    <property type="entry name" value="FA"/>
    <property type="match status" value="1"/>
</dbReference>
<dbReference type="Pfam" id="PF09380">
    <property type="entry name" value="FERM_C"/>
    <property type="match status" value="1"/>
</dbReference>
<dbReference type="Pfam" id="PF00373">
    <property type="entry name" value="FERM_M"/>
    <property type="match status" value="1"/>
</dbReference>
<dbReference type="Pfam" id="PF09379">
    <property type="entry name" value="FERM_N"/>
    <property type="match status" value="1"/>
</dbReference>
<dbReference type="PRINTS" id="PR00935">
    <property type="entry name" value="BAND41"/>
</dbReference>
<dbReference type="PRINTS" id="PR00661">
    <property type="entry name" value="ERMFAMILY"/>
</dbReference>
<dbReference type="SMART" id="SM00295">
    <property type="entry name" value="B41"/>
    <property type="match status" value="1"/>
</dbReference>
<dbReference type="SMART" id="SM01195">
    <property type="entry name" value="FA"/>
    <property type="match status" value="1"/>
</dbReference>
<dbReference type="SMART" id="SM01196">
    <property type="entry name" value="FERM_C"/>
    <property type="match status" value="1"/>
</dbReference>
<dbReference type="SUPFAM" id="SSF50729">
    <property type="entry name" value="PH domain-like"/>
    <property type="match status" value="1"/>
</dbReference>
<dbReference type="SUPFAM" id="SSF47031">
    <property type="entry name" value="Second domain of FERM"/>
    <property type="match status" value="1"/>
</dbReference>
<dbReference type="SUPFAM" id="SSF54236">
    <property type="entry name" value="Ubiquitin-like"/>
    <property type="match status" value="1"/>
</dbReference>
<dbReference type="PROSITE" id="PS00660">
    <property type="entry name" value="FERM_1"/>
    <property type="match status" value="1"/>
</dbReference>
<dbReference type="PROSITE" id="PS00661">
    <property type="entry name" value="FERM_2"/>
    <property type="match status" value="1"/>
</dbReference>
<dbReference type="PROSITE" id="PS50057">
    <property type="entry name" value="FERM_3"/>
    <property type="match status" value="1"/>
</dbReference>
<gene>
    <name type="primary">EPB41L5</name>
</gene>
<sequence>MLSFFRRTLGRRSMRKQAEKDRLREAQRAATHIPAAGDARAVITCRVSLLDGTDVSVDLPKKAKGQELFDQIMYHLDLIESDYFGLRFMDSAQVAHWLDGTKSIKKQVKIGSPYCLHLRVKFYSSEPNNLREELTRYLFVLQLKQDILSGKLECPFDTAVQLAAYNLQAELGDYDLAEHSPELVSEFRFVPIQTEEMELAIFEKWKEYRGQTPAQAETNYLNKAKWLEMYGVDMHVVKARDGNDYSLGLTPTGVLVFEGETKIGLFFWPKITRLDFKKNKLTLVVVEDDDQGKEQEHTFVFRLDHPKACKHLWKCAVEHHAFFRLRGPVQKNSHRSGFIRLGSRFRYSGKTEYQTTKTNKARRSTSFERRPSKRYSRRTLQVKASTGKPEELSVHNNVSAQSNGSQQAWGVRSTVPVIPSGPVVVEVENLPKSPGADQHDKKWLSAAGDRSQRGGNQWDTRALSPPHPAPRNYPAFVHEHNVKNAGAQQNAHFPGPAAMTDI</sequence>
<reference key="1">
    <citation type="journal article" date="2005" name="BMC Genomics">
        <title>Characterization of 954 bovine full-CDS cDNA sequences.</title>
        <authorList>
            <person name="Harhay G.P."/>
            <person name="Sonstegard T.S."/>
            <person name="Keele J.W."/>
            <person name="Heaton M.P."/>
            <person name="Clawson M.L."/>
            <person name="Snelling W.M."/>
            <person name="Wiedmann R.T."/>
            <person name="Van Tassell C.P."/>
            <person name="Smith T.P.L."/>
        </authorList>
    </citation>
    <scope>NUCLEOTIDE SEQUENCE [LARGE SCALE MRNA]</scope>
</reference>
<reference key="2">
    <citation type="submission" date="2005-09" db="EMBL/GenBank/DDBJ databases">
        <authorList>
            <consortium name="NIH - Mammalian Gene Collection (MGC) project"/>
        </authorList>
    </citation>
    <scope>NUCLEOTIDE SEQUENCE [LARGE SCALE MRNA]</scope>
    <source>
        <strain>Hereford</strain>
        <tissue>Fetal ascending colon</tissue>
    </source>
</reference>
<reference key="3">
    <citation type="journal article" date="2007" name="Exp. Cell Res.">
        <title>FERM protein EPB41L5 is a novel member of the mammalian CRB-MPP5 polarity complex.</title>
        <authorList>
            <person name="Gosens I."/>
            <person name="Sessa A."/>
            <person name="den Hollander A.I."/>
            <person name="Letteboer S.J.F."/>
            <person name="Belloni V."/>
            <person name="Arends M.L."/>
            <person name="Le Bivic A."/>
            <person name="Cremers F.P.M."/>
            <person name="Broccoli V."/>
            <person name="Roepman R."/>
        </authorList>
    </citation>
    <scope>INTERACTION WITH CRB1</scope>
    <scope>TISSUE SPECIFICITY</scope>
</reference>
<feature type="chain" id="PRO_0000330353" description="Band 4.1-like protein 5">
    <location>
        <begin position="1"/>
        <end position="502"/>
    </location>
</feature>
<feature type="domain" description="FERM" evidence="4">
    <location>
        <begin position="43"/>
        <end position="327"/>
    </location>
</feature>
<feature type="region of interest" description="Required for interaction with CRB1" evidence="3">
    <location>
        <begin position="29"/>
        <end position="119"/>
    </location>
</feature>
<feature type="region of interest" description="Disordered" evidence="5">
    <location>
        <begin position="359"/>
        <end position="391"/>
    </location>
</feature>
<feature type="region of interest" description="Disordered" evidence="5">
    <location>
        <begin position="430"/>
        <end position="470"/>
    </location>
</feature>
<feature type="modified residue" description="Phosphoserine" evidence="3">
    <location>
        <position position="433"/>
    </location>
</feature>
<comment type="function">
    <text evidence="3">Plays a role in the formation and organization of tight junctions during the establishment of polarity in epithelial cells.</text>
</comment>
<comment type="subunit">
    <text evidence="3 6">Component of a complex composed of PALS1, CRB1 and EPB41L5 (By similarity). Within the complex, interacts (via FERM domain) with PALS1 (via HOOK domain) and with CRB1 (via intracellular domain) (PubMed:17920587). Interacts with CRB2 (via intracellular domain) (By similarity). Interacts with CRB3 (via intracellular domain) (By similarity).</text>
</comment>
<comment type="interaction">
    <interactant intactId="EBI-26451934">
        <id>Q58CU2</id>
    </interactant>
    <interactant intactId="EBI-1048648">
        <id>P82279</id>
        <label>CRB1</label>
    </interactant>
    <organismsDiffer>true</organismsDiffer>
    <experiments>2</experiments>
</comment>
<comment type="subcellular location">
    <subcellularLocation>
        <location evidence="2">Cytoplasm</location>
    </subcellularLocation>
    <subcellularLocation>
        <location evidence="2">Cell junction</location>
        <location evidence="2">Adherens junction</location>
    </subcellularLocation>
    <subcellularLocation>
        <location evidence="2">Cell membrane</location>
        <topology evidence="7">Peripheral membrane protein</topology>
    </subcellularLocation>
    <subcellularLocation>
        <location evidence="1">Photoreceptor inner segment</location>
    </subcellularLocation>
</comment>
<comment type="tissue specificity">
    <text evidence="6">Expressed in the retina (at protein level).</text>
</comment>
<accession>Q58CU2</accession>
<keyword id="KW-0965">Cell junction</keyword>
<keyword id="KW-1003">Cell membrane</keyword>
<keyword id="KW-0963">Cytoplasm</keyword>
<keyword id="KW-0472">Membrane</keyword>
<keyword id="KW-0597">Phosphoprotein</keyword>
<keyword id="KW-1185">Reference proteome</keyword>
<protein>
    <recommendedName>
        <fullName>Band 4.1-like protein 5</fullName>
    </recommendedName>
    <alternativeName>
        <fullName evidence="3">Erythrocyte membrane protein band 4.1-like 5</fullName>
    </alternativeName>
</protein>
<name>E41L5_BOVIN</name>